<keyword id="KW-0008">Acetylcholine receptor inhibiting toxin</keyword>
<keyword id="KW-0903">Direct protein sequencing</keyword>
<keyword id="KW-0872">Ion channel impairing toxin</keyword>
<keyword id="KW-0528">Neurotoxin</keyword>
<keyword id="KW-0629">Postsynaptic neurotoxin</keyword>
<keyword id="KW-1185">Reference proteome</keyword>
<keyword id="KW-0964">Secreted</keyword>
<keyword id="KW-0800">Toxin</keyword>
<sequence length="11" mass="1319">LTCYKGYRDTV</sequence>
<comment type="function">
    <text evidence="1 2">Binds with high affinity to muscular (alpha-1/CHRNA1) and neuronal (alpha-7/CHRNA7) nicotinic acetylcholine receptor (nAChR) and hinders acetylcholine binding to the receptor, thereby impairing neuromuscular and neuronal transmission.</text>
</comment>
<comment type="subcellular location">
    <subcellularLocation>
        <location evidence="2">Secreted</location>
    </subcellularLocation>
</comment>
<comment type="tissue specificity">
    <text evidence="3">Expressed by the venom gland.</text>
</comment>
<comment type="mass spectrometry" mass="6236.0" method="Electrospray" evidence="2"/>
<comment type="toxic dose">
    <text evidence="2">LD(50) is 0.84 mg/kg by intravenous injection.</text>
</comment>
<comment type="similarity">
    <text evidence="3">Belongs to the three-finger toxin family. Short-chain subfamily. Type III alpha-neurotoxin sub-subfamily.</text>
</comment>
<protein>
    <recommendedName>
        <fullName>Short neurotoxin N1</fullName>
    </recommendedName>
    <alternativeName>
        <fullName>Alpha-neurotoxin</fullName>
    </alternativeName>
</protein>
<proteinExistence type="evidence at protein level"/>
<name>3S331_PSETE</name>
<organism>
    <name type="scientific">Pseudonaja textilis</name>
    <name type="common">Eastern brown snake</name>
    <dbReference type="NCBI Taxonomy" id="8673"/>
    <lineage>
        <taxon>Eukaryota</taxon>
        <taxon>Metazoa</taxon>
        <taxon>Chordata</taxon>
        <taxon>Craniata</taxon>
        <taxon>Vertebrata</taxon>
        <taxon>Euteleostomi</taxon>
        <taxon>Lepidosauria</taxon>
        <taxon>Squamata</taxon>
        <taxon>Bifurcata</taxon>
        <taxon>Unidentata</taxon>
        <taxon>Episquamata</taxon>
        <taxon>Toxicofera</taxon>
        <taxon>Serpentes</taxon>
        <taxon>Colubroidea</taxon>
        <taxon>Elapidae</taxon>
        <taxon>Hydrophiinae</taxon>
        <taxon>Pseudonaja</taxon>
    </lineage>
</organism>
<evidence type="ECO:0000250" key="1">
    <source>
        <dbReference type="UniProtKB" id="P60615"/>
    </source>
</evidence>
<evidence type="ECO:0000269" key="2">
    <source>
    </source>
</evidence>
<evidence type="ECO:0000305" key="3"/>
<accession>P59072</accession>
<dbReference type="Proteomes" id="UP000472273">
    <property type="component" value="Unplaced"/>
</dbReference>
<dbReference type="GO" id="GO:0005576">
    <property type="term" value="C:extracellular region"/>
    <property type="evidence" value="ECO:0007669"/>
    <property type="project" value="UniProtKB-SubCell"/>
</dbReference>
<dbReference type="GO" id="GO:0030550">
    <property type="term" value="F:acetylcholine receptor inhibitor activity"/>
    <property type="evidence" value="ECO:0007669"/>
    <property type="project" value="UniProtKB-KW"/>
</dbReference>
<dbReference type="GO" id="GO:0099106">
    <property type="term" value="F:ion channel regulator activity"/>
    <property type="evidence" value="ECO:0007669"/>
    <property type="project" value="UniProtKB-KW"/>
</dbReference>
<dbReference type="GO" id="GO:0090729">
    <property type="term" value="F:toxin activity"/>
    <property type="evidence" value="ECO:0007669"/>
    <property type="project" value="UniProtKB-KW"/>
</dbReference>
<reference key="1">
    <citation type="journal article" date="1999" name="Eur. J. Biochem.">
        <title>Postsynaptic short-chain neurotoxins from Pseudonaja textilis: cDNA cloning, expression and protein characterization.</title>
        <authorList>
            <person name="Gong N.L."/>
            <person name="Armugam A."/>
            <person name="Jeyaseelan K."/>
        </authorList>
    </citation>
    <scope>PROTEIN SEQUENCE</scope>
    <scope>TOXIC DOSE</scope>
    <scope>MASS SPECTROMETRY</scope>
    <scope>SUBCELLULAR LOCATION</scope>
    <source>
        <tissue>Venom</tissue>
    </source>
</reference>
<feature type="chain" id="PRO_0000093616" description="Short neurotoxin N1" evidence="2">
    <location>
        <begin position="1"/>
        <end position="11" status="greater than"/>
    </location>
</feature>
<feature type="unsure residue">
    <location>
        <position position="3"/>
    </location>
</feature>
<feature type="non-terminal residue">
    <location>
        <position position="11"/>
    </location>
</feature>